<dbReference type="EC" id="2.7.7.99" evidence="1"/>
<dbReference type="EMBL" id="AE005673">
    <property type="protein sequence ID" value="AAK25498.1"/>
    <property type="molecule type" value="Genomic_DNA"/>
</dbReference>
<dbReference type="PIR" id="F87687">
    <property type="entry name" value="F87687"/>
</dbReference>
<dbReference type="RefSeq" id="NP_422330.1">
    <property type="nucleotide sequence ID" value="NC_002696.2"/>
</dbReference>
<dbReference type="RefSeq" id="WP_010921365.1">
    <property type="nucleotide sequence ID" value="NC_002696.2"/>
</dbReference>
<dbReference type="SMR" id="Q9A2M1"/>
<dbReference type="STRING" id="190650.CC_3536"/>
<dbReference type="EnsemblBacteria" id="AAK25498">
    <property type="protein sequence ID" value="AAK25498"/>
    <property type="gene ID" value="CC_3536"/>
</dbReference>
<dbReference type="KEGG" id="ccr:CC_3536"/>
<dbReference type="PATRIC" id="fig|190650.5.peg.3542"/>
<dbReference type="eggNOG" id="COG1208">
    <property type="taxonomic scope" value="Bacteria"/>
</dbReference>
<dbReference type="HOGENOM" id="CLU_029499_2_1_5"/>
<dbReference type="BioCyc" id="CAULO:CC3536-MONOMER"/>
<dbReference type="UniPathway" id="UPA00544"/>
<dbReference type="Proteomes" id="UP000001816">
    <property type="component" value="Chromosome"/>
</dbReference>
<dbReference type="GO" id="GO:0046872">
    <property type="term" value="F:metal ion binding"/>
    <property type="evidence" value="ECO:0007669"/>
    <property type="project" value="UniProtKB-KW"/>
</dbReference>
<dbReference type="GO" id="GO:0016779">
    <property type="term" value="F:nucleotidyltransferase activity"/>
    <property type="evidence" value="ECO:0007669"/>
    <property type="project" value="UniProtKB-KW"/>
</dbReference>
<dbReference type="GO" id="GO:0071555">
    <property type="term" value="P:cell wall organization"/>
    <property type="evidence" value="ECO:0007669"/>
    <property type="project" value="UniProtKB-KW"/>
</dbReference>
<dbReference type="GO" id="GO:0009252">
    <property type="term" value="P:peptidoglycan biosynthetic process"/>
    <property type="evidence" value="ECO:0007669"/>
    <property type="project" value="UniProtKB-KW"/>
</dbReference>
<dbReference type="GO" id="GO:0009254">
    <property type="term" value="P:peptidoglycan turnover"/>
    <property type="evidence" value="ECO:0007669"/>
    <property type="project" value="UniProtKB-UniPathway"/>
</dbReference>
<dbReference type="GO" id="GO:0008360">
    <property type="term" value="P:regulation of cell shape"/>
    <property type="evidence" value="ECO:0007669"/>
    <property type="project" value="UniProtKB-KW"/>
</dbReference>
<dbReference type="CDD" id="cd06422">
    <property type="entry name" value="NTP_transferase_like_1"/>
    <property type="match status" value="1"/>
</dbReference>
<dbReference type="Gene3D" id="3.90.550.10">
    <property type="entry name" value="Spore Coat Polysaccharide Biosynthesis Protein SpsA, Chain A"/>
    <property type="match status" value="1"/>
</dbReference>
<dbReference type="InterPro" id="IPR050065">
    <property type="entry name" value="GlmU-like"/>
</dbReference>
<dbReference type="InterPro" id="IPR025877">
    <property type="entry name" value="MobA-like_NTP_Trfase"/>
</dbReference>
<dbReference type="InterPro" id="IPR054913">
    <property type="entry name" value="MurNAcPUrMurU"/>
</dbReference>
<dbReference type="InterPro" id="IPR029044">
    <property type="entry name" value="Nucleotide-diphossugar_trans"/>
</dbReference>
<dbReference type="NCBIfam" id="NF045697">
    <property type="entry name" value="MurNAcPUrMurU"/>
    <property type="match status" value="1"/>
</dbReference>
<dbReference type="PANTHER" id="PTHR43584:SF8">
    <property type="entry name" value="N-ACETYLMURAMATE ALPHA-1-PHOSPHATE URIDYLYLTRANSFERASE"/>
    <property type="match status" value="1"/>
</dbReference>
<dbReference type="PANTHER" id="PTHR43584">
    <property type="entry name" value="NUCLEOTIDYL TRANSFERASE"/>
    <property type="match status" value="1"/>
</dbReference>
<dbReference type="Pfam" id="PF12804">
    <property type="entry name" value="NTP_transf_3"/>
    <property type="match status" value="1"/>
</dbReference>
<dbReference type="SUPFAM" id="SSF53448">
    <property type="entry name" value="Nucleotide-diphospho-sugar transferases"/>
    <property type="match status" value="1"/>
</dbReference>
<comment type="function">
    <text evidence="1 2">Catalyzes the formation of UDP-N-acetylmuramate (UDP-MurNAc), a crucial precursor of the bacterial peptidoglycan cell wall, from UTP and MurNAc-alpha-1P. Is likely involved in peptidoglycan recycling as part of a cell wall recycling pathway that bypasses de novo biosynthesis of the peptidoglycan precursor UDP-MurNAc (PubMed:23831760). Is able to complement the fosfomycin sensitivity phenotype of a P.putida mutant lacking murU (PubMed:23831760).</text>
</comment>
<comment type="catalytic activity">
    <reaction evidence="1">
        <text>N-acetyl-alpha-D-muramate 1-phosphate + UDP + H(+) = UDP-N-acetyl-alpha-D-muramate + phosphate</text>
        <dbReference type="Rhea" id="RHEA:53716"/>
        <dbReference type="ChEBI" id="CHEBI:15378"/>
        <dbReference type="ChEBI" id="CHEBI:43474"/>
        <dbReference type="ChEBI" id="CHEBI:58223"/>
        <dbReference type="ChEBI" id="CHEBI:70757"/>
        <dbReference type="ChEBI" id="CHEBI:137594"/>
        <dbReference type="EC" id="2.7.7.99"/>
    </reaction>
</comment>
<comment type="cofactor">
    <cofactor evidence="1">
        <name>Mg(2+)</name>
        <dbReference type="ChEBI" id="CHEBI:18420"/>
    </cofactor>
</comment>
<comment type="pathway">
    <text evidence="4">Cell wall biogenesis; peptidoglycan recycling.</text>
</comment>
<comment type="subunit">
    <text evidence="1">Monomer.</text>
</comment>
<comment type="similarity">
    <text evidence="3">Belongs to the nucleotidyltransferase MurU family.</text>
</comment>
<keyword id="KW-0119">Carbohydrate metabolism</keyword>
<keyword id="KW-0133">Cell shape</keyword>
<keyword id="KW-0961">Cell wall biogenesis/degradation</keyword>
<keyword id="KW-0460">Magnesium</keyword>
<keyword id="KW-0479">Metal-binding</keyword>
<keyword id="KW-0548">Nucleotidyltransferase</keyword>
<keyword id="KW-0573">Peptidoglycan synthesis</keyword>
<keyword id="KW-1185">Reference proteome</keyword>
<keyword id="KW-0808">Transferase</keyword>
<accession>Q9A2M1</accession>
<reference key="1">
    <citation type="journal article" date="2001" name="Proc. Natl. Acad. Sci. U.S.A.">
        <title>Complete genome sequence of Caulobacter crescentus.</title>
        <authorList>
            <person name="Nierman W.C."/>
            <person name="Feldblyum T.V."/>
            <person name="Laub M.T."/>
            <person name="Paulsen I.T."/>
            <person name="Nelson K.E."/>
            <person name="Eisen J.A."/>
            <person name="Heidelberg J.F."/>
            <person name="Alley M.R.K."/>
            <person name="Ohta N."/>
            <person name="Maddock J.R."/>
            <person name="Potocka I."/>
            <person name="Nelson W.C."/>
            <person name="Newton A."/>
            <person name="Stephens C."/>
            <person name="Phadke N.D."/>
            <person name="Ely B."/>
            <person name="DeBoy R.T."/>
            <person name="Dodson R.J."/>
            <person name="Durkin A.S."/>
            <person name="Gwinn M.L."/>
            <person name="Haft D.H."/>
            <person name="Kolonay J.F."/>
            <person name="Smit J."/>
            <person name="Craven M.B."/>
            <person name="Khouri H.M."/>
            <person name="Shetty J."/>
            <person name="Berry K.J."/>
            <person name="Utterback T.R."/>
            <person name="Tran K."/>
            <person name="Wolf A.M."/>
            <person name="Vamathevan J.J."/>
            <person name="Ermolaeva M.D."/>
            <person name="White O."/>
            <person name="Salzberg S.L."/>
            <person name="Venter J.C."/>
            <person name="Shapiro L."/>
            <person name="Fraser C.M."/>
        </authorList>
    </citation>
    <scope>NUCLEOTIDE SEQUENCE [LARGE SCALE GENOMIC DNA]</scope>
    <source>
        <strain>ATCC 19089 / CIP 103742 / CB 15</strain>
    </source>
</reference>
<reference key="2">
    <citation type="journal article" date="2013" name="Nat. Chem. Biol.">
        <title>A cell wall recycling shortcut that bypasses peptidoglycan de novo biosynthesis.</title>
        <authorList>
            <person name="Gisin J."/>
            <person name="Schneider A."/>
            <person name="Naegele B."/>
            <person name="Borisova M."/>
            <person name="Mayer C."/>
        </authorList>
    </citation>
    <scope>FUNCTION</scope>
    <scope>PATHWAY</scope>
    <source>
        <strain>ATCC 19089 / CIP 103742 / CB 15</strain>
    </source>
</reference>
<gene>
    <name evidence="1" type="primary">murU</name>
    <name evidence="5" type="ordered locus">CC_3536</name>
</gene>
<sequence>MSQAPKIAMVLAAGLGTRMRPLTNDRPKALVEVAGKALIDHMLDRLVAASVETAVVNVHYFADLVEAHLRAREAKGLAPRIVISDERVQALETGGGIKHALALLGEGPVFVANIDSIWIEHAGAAVDAVAAAWDPERMDVCLMLASTTESLGFHDTGDVFLSADGLVRFKDAGEIAPLVYVGVHICKPEITADGPDGPFSLLPLWKRLAADGRVCGVAPEGLWMHVGDPQAKLAAEARLAEA</sequence>
<feature type="chain" id="PRO_0000441272" description="N-acetylmuramate alpha-1-phosphate uridylyltransferase">
    <location>
        <begin position="1"/>
        <end position="242"/>
    </location>
</feature>
<feature type="binding site" evidence="1">
    <location>
        <begin position="16"/>
        <end position="18"/>
    </location>
    <ligand>
        <name>UTP</name>
        <dbReference type="ChEBI" id="CHEBI:46398"/>
    </ligand>
</feature>
<feature type="binding site" evidence="1">
    <location>
        <position position="28"/>
    </location>
    <ligand>
        <name>UTP</name>
        <dbReference type="ChEBI" id="CHEBI:46398"/>
    </ligand>
</feature>
<feature type="binding site" evidence="1">
    <location>
        <position position="113"/>
    </location>
    <ligand>
        <name>substrate</name>
    </ligand>
</feature>
<feature type="binding site" evidence="1">
    <location>
        <position position="115"/>
    </location>
    <ligand>
        <name>Mg(2+)</name>
        <dbReference type="ChEBI" id="CHEBI:18420"/>
    </ligand>
</feature>
<feature type="binding site" evidence="1">
    <location>
        <position position="158"/>
    </location>
    <ligand>
        <name>substrate</name>
    </ligand>
</feature>
<evidence type="ECO:0000250" key="1">
    <source>
        <dbReference type="UniProtKB" id="Q88QT2"/>
    </source>
</evidence>
<evidence type="ECO:0000269" key="2">
    <source>
    </source>
</evidence>
<evidence type="ECO:0000305" key="3"/>
<evidence type="ECO:0000305" key="4">
    <source>
    </source>
</evidence>
<evidence type="ECO:0000312" key="5">
    <source>
        <dbReference type="EMBL" id="AAK25498.1"/>
    </source>
</evidence>
<protein>
    <recommendedName>
        <fullName evidence="1">N-acetylmuramate alpha-1-phosphate uridylyltransferase</fullName>
        <shortName evidence="1">MurNAc-1P uridylyltransferase</shortName>
        <shortName evidence="1">MurNAc-alpha-1P uridylyltransferase</shortName>
        <ecNumber evidence="1">2.7.7.99</ecNumber>
    </recommendedName>
</protein>
<proteinExistence type="inferred from homology"/>
<name>MURU_CAUVC</name>
<organism>
    <name type="scientific">Caulobacter vibrioides (strain ATCC 19089 / CIP 103742 / CB 15)</name>
    <name type="common">Caulobacter crescentus</name>
    <dbReference type="NCBI Taxonomy" id="190650"/>
    <lineage>
        <taxon>Bacteria</taxon>
        <taxon>Pseudomonadati</taxon>
        <taxon>Pseudomonadota</taxon>
        <taxon>Alphaproteobacteria</taxon>
        <taxon>Caulobacterales</taxon>
        <taxon>Caulobacteraceae</taxon>
        <taxon>Caulobacter</taxon>
    </lineage>
</organism>